<protein>
    <recommendedName>
        <fullName evidence="1">Acid shock protein</fullName>
    </recommendedName>
</protein>
<proteinExistence type="inferred from homology"/>
<comment type="function">
    <text evidence="1">Required for growth and/or survival at acidic conditions.</text>
</comment>
<comment type="subcellular location">
    <subcellularLocation>
        <location evidence="1">Periplasm</location>
    </subcellularLocation>
</comment>
<comment type="PTM">
    <text evidence="1">Proteolytic processing gives rise to the active protein.</text>
</comment>
<comment type="similarity">
    <text evidence="1">Belongs to the Asr family.</text>
</comment>
<reference key="1">
    <citation type="journal article" date="2008" name="J. Bacteriol.">
        <title>The complete genome sequence of Escherichia coli DH10B: insights into the biology of a laboratory workhorse.</title>
        <authorList>
            <person name="Durfee T."/>
            <person name="Nelson R."/>
            <person name="Baldwin S."/>
            <person name="Plunkett G. III"/>
            <person name="Burland V."/>
            <person name="Mau B."/>
            <person name="Petrosino J.F."/>
            <person name="Qin X."/>
            <person name="Muzny D.M."/>
            <person name="Ayele M."/>
            <person name="Gibbs R.A."/>
            <person name="Csorgo B."/>
            <person name="Posfai G."/>
            <person name="Weinstock G.M."/>
            <person name="Blattner F.R."/>
        </authorList>
    </citation>
    <scope>NUCLEOTIDE SEQUENCE [LARGE SCALE GENOMIC DNA]</scope>
    <source>
        <strain>K12 / DH10B</strain>
    </source>
</reference>
<feature type="signal peptide" evidence="1">
    <location>
        <begin position="1"/>
        <end position="21"/>
    </location>
</feature>
<feature type="propeptide" id="PRO_1000128927" evidence="1">
    <location>
        <begin position="22"/>
        <end position="58"/>
    </location>
</feature>
<feature type="chain" id="PRO_1000128928" description="Acid shock protein">
    <location>
        <begin position="59"/>
        <end position="102"/>
    </location>
</feature>
<feature type="region of interest" description="Disordered" evidence="2">
    <location>
        <begin position="21"/>
        <end position="102"/>
    </location>
</feature>
<feature type="compositionally biased region" description="Low complexity" evidence="2">
    <location>
        <begin position="21"/>
        <end position="41"/>
    </location>
</feature>
<feature type="compositionally biased region" description="Basic residues" evidence="2">
    <location>
        <begin position="80"/>
        <end position="90"/>
    </location>
</feature>
<feature type="compositionally biased region" description="Low complexity" evidence="2">
    <location>
        <begin position="91"/>
        <end position="102"/>
    </location>
</feature>
<sequence length="102" mass="10591">MKKVLALVVAAAMGLSSAAFAAETTTTPAPTATTTKAAPAKTTHHKKQHKAAPAQKAQAAKKHHKNTKAEQKAPEQKAQAAKKHAKKHSHQQPAKPAAQPAA</sequence>
<evidence type="ECO:0000255" key="1">
    <source>
        <dbReference type="HAMAP-Rule" id="MF_00546"/>
    </source>
</evidence>
<evidence type="ECO:0000256" key="2">
    <source>
        <dbReference type="SAM" id="MobiDB-lite"/>
    </source>
</evidence>
<gene>
    <name evidence="1" type="primary">asr</name>
    <name type="ordered locus">ECDH10B_1730</name>
</gene>
<keyword id="KW-0574">Periplasm</keyword>
<keyword id="KW-0732">Signal</keyword>
<name>ASR_ECODH</name>
<organism>
    <name type="scientific">Escherichia coli (strain K12 / DH10B)</name>
    <dbReference type="NCBI Taxonomy" id="316385"/>
    <lineage>
        <taxon>Bacteria</taxon>
        <taxon>Pseudomonadati</taxon>
        <taxon>Pseudomonadota</taxon>
        <taxon>Gammaproteobacteria</taxon>
        <taxon>Enterobacterales</taxon>
        <taxon>Enterobacteriaceae</taxon>
        <taxon>Escherichia</taxon>
    </lineage>
</organism>
<accession>B1XF62</accession>
<dbReference type="EMBL" id="CP000948">
    <property type="protein sequence ID" value="ACB02803.1"/>
    <property type="molecule type" value="Genomic_DNA"/>
</dbReference>
<dbReference type="RefSeq" id="WP_001340364.1">
    <property type="nucleotide sequence ID" value="NC_010473.1"/>
</dbReference>
<dbReference type="KEGG" id="ecd:ECDH10B_1730"/>
<dbReference type="HOGENOM" id="CLU_102486_2_0_6"/>
<dbReference type="GO" id="GO:0042597">
    <property type="term" value="C:periplasmic space"/>
    <property type="evidence" value="ECO:0007669"/>
    <property type="project" value="UniProtKB-SubCell"/>
</dbReference>
<dbReference type="HAMAP" id="MF_00546">
    <property type="entry name" value="Asr"/>
    <property type="match status" value="1"/>
</dbReference>
<dbReference type="InterPro" id="IPR023497">
    <property type="entry name" value="Acid_shock"/>
</dbReference>
<dbReference type="NCBIfam" id="NF033636">
    <property type="entry name" value="acid_shock_Asr"/>
    <property type="match status" value="1"/>
</dbReference>
<dbReference type="Pfam" id="PF06392">
    <property type="entry name" value="Asr"/>
    <property type="match status" value="1"/>
</dbReference>